<keyword id="KW-1185">Reference proteome</keyword>
<keyword id="KW-0687">Ribonucleoprotein</keyword>
<keyword id="KW-0689">Ribosomal protein</keyword>
<comment type="similarity">
    <text evidence="1">Belongs to the bacterial ribosomal protein bL28 family.</text>
</comment>
<protein>
    <recommendedName>
        <fullName evidence="1">Large ribosomal subunit protein bL28</fullName>
    </recommendedName>
    <alternativeName>
        <fullName evidence="3">50S ribosomal protein L28</fullName>
    </alternativeName>
</protein>
<name>RL28_SYNR3</name>
<evidence type="ECO:0000255" key="1">
    <source>
        <dbReference type="HAMAP-Rule" id="MF_00373"/>
    </source>
</evidence>
<evidence type="ECO:0000256" key="2">
    <source>
        <dbReference type="SAM" id="MobiDB-lite"/>
    </source>
</evidence>
<evidence type="ECO:0000305" key="3"/>
<accession>A5GTS7</accession>
<feature type="chain" id="PRO_1000007387" description="Large ribosomal subunit protein bL28">
    <location>
        <begin position="1"/>
        <end position="78"/>
    </location>
</feature>
<feature type="region of interest" description="Disordered" evidence="2">
    <location>
        <begin position="1"/>
        <end position="21"/>
    </location>
</feature>
<dbReference type="EMBL" id="CT978603">
    <property type="protein sequence ID" value="CAK28286.1"/>
    <property type="molecule type" value="Genomic_DNA"/>
</dbReference>
<dbReference type="SMR" id="A5GTS7"/>
<dbReference type="STRING" id="316278.SynRCC307_1383"/>
<dbReference type="KEGG" id="syr:SynRCC307_1383"/>
<dbReference type="eggNOG" id="COG0227">
    <property type="taxonomic scope" value="Bacteria"/>
</dbReference>
<dbReference type="HOGENOM" id="CLU_064548_3_0_3"/>
<dbReference type="OrthoDB" id="9805609at2"/>
<dbReference type="Proteomes" id="UP000001115">
    <property type="component" value="Chromosome"/>
</dbReference>
<dbReference type="GO" id="GO:1990904">
    <property type="term" value="C:ribonucleoprotein complex"/>
    <property type="evidence" value="ECO:0007669"/>
    <property type="project" value="UniProtKB-KW"/>
</dbReference>
<dbReference type="GO" id="GO:0005840">
    <property type="term" value="C:ribosome"/>
    <property type="evidence" value="ECO:0007669"/>
    <property type="project" value="UniProtKB-KW"/>
</dbReference>
<dbReference type="GO" id="GO:0003735">
    <property type="term" value="F:structural constituent of ribosome"/>
    <property type="evidence" value="ECO:0007669"/>
    <property type="project" value="InterPro"/>
</dbReference>
<dbReference type="GO" id="GO:0006412">
    <property type="term" value="P:translation"/>
    <property type="evidence" value="ECO:0007669"/>
    <property type="project" value="UniProtKB-UniRule"/>
</dbReference>
<dbReference type="Gene3D" id="2.30.170.40">
    <property type="entry name" value="Ribosomal protein L28/L24"/>
    <property type="match status" value="1"/>
</dbReference>
<dbReference type="HAMAP" id="MF_00373">
    <property type="entry name" value="Ribosomal_bL28"/>
    <property type="match status" value="1"/>
</dbReference>
<dbReference type="InterPro" id="IPR026569">
    <property type="entry name" value="Ribosomal_bL28"/>
</dbReference>
<dbReference type="InterPro" id="IPR034704">
    <property type="entry name" value="Ribosomal_bL28/bL31-like_sf"/>
</dbReference>
<dbReference type="InterPro" id="IPR001383">
    <property type="entry name" value="Ribosomal_bL28_bact-type"/>
</dbReference>
<dbReference type="InterPro" id="IPR037147">
    <property type="entry name" value="Ribosomal_bL28_sf"/>
</dbReference>
<dbReference type="NCBIfam" id="TIGR00009">
    <property type="entry name" value="L28"/>
    <property type="match status" value="1"/>
</dbReference>
<dbReference type="PANTHER" id="PTHR13528">
    <property type="entry name" value="39S RIBOSOMAL PROTEIN L28, MITOCHONDRIAL"/>
    <property type="match status" value="1"/>
</dbReference>
<dbReference type="PANTHER" id="PTHR13528:SF2">
    <property type="entry name" value="LARGE RIBOSOMAL SUBUNIT PROTEIN BL28M"/>
    <property type="match status" value="1"/>
</dbReference>
<dbReference type="Pfam" id="PF00830">
    <property type="entry name" value="Ribosomal_L28"/>
    <property type="match status" value="1"/>
</dbReference>
<dbReference type="SUPFAM" id="SSF143800">
    <property type="entry name" value="L28p-like"/>
    <property type="match status" value="1"/>
</dbReference>
<sequence>MSRVCQLSGKRANNGMAVSHSHVRTKKLQQVNLQQRRLWWAEGNRWVKLRVSTSALRTIQKKGLGAYAKELGINLAKI</sequence>
<proteinExistence type="inferred from homology"/>
<gene>
    <name evidence="1" type="primary">rpmB</name>
    <name evidence="1" type="synonym">rpl28</name>
    <name type="ordered locus">SynRCC307_1383</name>
</gene>
<reference key="1">
    <citation type="submission" date="2006-05" db="EMBL/GenBank/DDBJ databases">
        <authorList>
            <consortium name="Genoscope"/>
        </authorList>
    </citation>
    <scope>NUCLEOTIDE SEQUENCE [LARGE SCALE GENOMIC DNA]</scope>
    <source>
        <strain>RCC307</strain>
    </source>
</reference>
<organism>
    <name type="scientific">Synechococcus sp. (strain RCC307)</name>
    <dbReference type="NCBI Taxonomy" id="316278"/>
    <lineage>
        <taxon>Bacteria</taxon>
        <taxon>Bacillati</taxon>
        <taxon>Cyanobacteriota</taxon>
        <taxon>Cyanophyceae</taxon>
        <taxon>Synechococcales</taxon>
        <taxon>Synechococcaceae</taxon>
        <taxon>Synechococcus</taxon>
    </lineage>
</organism>